<accession>Q9KUJ4</accession>
<comment type="function">
    <text evidence="1">Catalyzes the dephosphorylation of undecaprenyl diphosphate (UPP). Confers resistance to bacitracin.</text>
</comment>
<comment type="catalytic activity">
    <reaction evidence="1">
        <text>di-trans,octa-cis-undecaprenyl diphosphate + H2O = di-trans,octa-cis-undecaprenyl phosphate + phosphate + H(+)</text>
        <dbReference type="Rhea" id="RHEA:28094"/>
        <dbReference type="ChEBI" id="CHEBI:15377"/>
        <dbReference type="ChEBI" id="CHEBI:15378"/>
        <dbReference type="ChEBI" id="CHEBI:43474"/>
        <dbReference type="ChEBI" id="CHEBI:58405"/>
        <dbReference type="ChEBI" id="CHEBI:60392"/>
        <dbReference type="EC" id="3.6.1.27"/>
    </reaction>
</comment>
<comment type="subcellular location">
    <subcellularLocation>
        <location evidence="1">Cell inner membrane</location>
        <topology evidence="1">Multi-pass membrane protein</topology>
    </subcellularLocation>
</comment>
<comment type="miscellaneous">
    <text>Bacitracin is thought to be involved in the inhibition of peptidoglycan synthesis by sequestering undecaprenyl diphosphate, thereby reducing the pool of lipid carrier available.</text>
</comment>
<comment type="similarity">
    <text evidence="1">Belongs to the UppP family.</text>
</comment>
<organism>
    <name type="scientific">Vibrio cholerae serotype O1 (strain ATCC 39315 / El Tor Inaba N16961)</name>
    <dbReference type="NCBI Taxonomy" id="243277"/>
    <lineage>
        <taxon>Bacteria</taxon>
        <taxon>Pseudomonadati</taxon>
        <taxon>Pseudomonadota</taxon>
        <taxon>Gammaproteobacteria</taxon>
        <taxon>Vibrionales</taxon>
        <taxon>Vibrionaceae</taxon>
        <taxon>Vibrio</taxon>
    </lineage>
</organism>
<evidence type="ECO:0000255" key="1">
    <source>
        <dbReference type="HAMAP-Rule" id="MF_01006"/>
    </source>
</evidence>
<gene>
    <name evidence="1" type="primary">uppP</name>
    <name type="synonym">bacA</name>
    <name type="synonym">upk</name>
    <name type="ordered locus">VC_0526</name>
</gene>
<proteinExistence type="inferred from homology"/>
<name>UPPP_VIBCH</name>
<reference key="1">
    <citation type="journal article" date="2000" name="Nature">
        <title>DNA sequence of both chromosomes of the cholera pathogen Vibrio cholerae.</title>
        <authorList>
            <person name="Heidelberg J.F."/>
            <person name="Eisen J.A."/>
            <person name="Nelson W.C."/>
            <person name="Clayton R.A."/>
            <person name="Gwinn M.L."/>
            <person name="Dodson R.J."/>
            <person name="Haft D.H."/>
            <person name="Hickey E.K."/>
            <person name="Peterson J.D."/>
            <person name="Umayam L.A."/>
            <person name="Gill S.R."/>
            <person name="Nelson K.E."/>
            <person name="Read T.D."/>
            <person name="Tettelin H."/>
            <person name="Richardson D.L."/>
            <person name="Ermolaeva M.D."/>
            <person name="Vamathevan J.J."/>
            <person name="Bass S."/>
            <person name="Qin H."/>
            <person name="Dragoi I."/>
            <person name="Sellers P."/>
            <person name="McDonald L.A."/>
            <person name="Utterback T.R."/>
            <person name="Fleischmann R.D."/>
            <person name="Nierman W.C."/>
            <person name="White O."/>
            <person name="Salzberg S.L."/>
            <person name="Smith H.O."/>
            <person name="Colwell R.R."/>
            <person name="Mekalanos J.J."/>
            <person name="Venter J.C."/>
            <person name="Fraser C.M."/>
        </authorList>
    </citation>
    <scope>NUCLEOTIDE SEQUENCE [LARGE SCALE GENOMIC DNA]</scope>
    <source>
        <strain>ATCC 39315 / El Tor Inaba N16961</strain>
    </source>
</reference>
<dbReference type="EC" id="3.6.1.27" evidence="1"/>
<dbReference type="EMBL" id="AE003852">
    <property type="protein sequence ID" value="AAF93694.1"/>
    <property type="molecule type" value="Genomic_DNA"/>
</dbReference>
<dbReference type="PIR" id="E82313">
    <property type="entry name" value="E82313"/>
</dbReference>
<dbReference type="RefSeq" id="NP_230177.1">
    <property type="nucleotide sequence ID" value="NC_002505.1"/>
</dbReference>
<dbReference type="RefSeq" id="WP_000119813.1">
    <property type="nucleotide sequence ID" value="NZ_LT906614.1"/>
</dbReference>
<dbReference type="SMR" id="Q9KUJ4"/>
<dbReference type="STRING" id="243277.VC_0526"/>
<dbReference type="DNASU" id="2615817"/>
<dbReference type="EnsemblBacteria" id="AAF93694">
    <property type="protein sequence ID" value="AAF93694"/>
    <property type="gene ID" value="VC_0526"/>
</dbReference>
<dbReference type="KEGG" id="vch:VC_0526"/>
<dbReference type="PATRIC" id="fig|243277.26.peg.502"/>
<dbReference type="eggNOG" id="COG1968">
    <property type="taxonomic scope" value="Bacteria"/>
</dbReference>
<dbReference type="HOGENOM" id="CLU_060296_1_0_6"/>
<dbReference type="Proteomes" id="UP000000584">
    <property type="component" value="Chromosome 1"/>
</dbReference>
<dbReference type="GO" id="GO:0005886">
    <property type="term" value="C:plasma membrane"/>
    <property type="evidence" value="ECO:0000318"/>
    <property type="project" value="GO_Central"/>
</dbReference>
<dbReference type="GO" id="GO:0050380">
    <property type="term" value="F:undecaprenyl-diphosphatase activity"/>
    <property type="evidence" value="ECO:0000318"/>
    <property type="project" value="GO_Central"/>
</dbReference>
<dbReference type="GO" id="GO:0071555">
    <property type="term" value="P:cell wall organization"/>
    <property type="evidence" value="ECO:0007669"/>
    <property type="project" value="UniProtKB-KW"/>
</dbReference>
<dbReference type="GO" id="GO:0009252">
    <property type="term" value="P:peptidoglycan biosynthetic process"/>
    <property type="evidence" value="ECO:0007669"/>
    <property type="project" value="UniProtKB-KW"/>
</dbReference>
<dbReference type="GO" id="GO:0000270">
    <property type="term" value="P:peptidoglycan metabolic process"/>
    <property type="evidence" value="ECO:0000318"/>
    <property type="project" value="GO_Central"/>
</dbReference>
<dbReference type="GO" id="GO:0008360">
    <property type="term" value="P:regulation of cell shape"/>
    <property type="evidence" value="ECO:0007669"/>
    <property type="project" value="UniProtKB-KW"/>
</dbReference>
<dbReference type="GO" id="GO:0046677">
    <property type="term" value="P:response to antibiotic"/>
    <property type="evidence" value="ECO:0007669"/>
    <property type="project" value="UniProtKB-UniRule"/>
</dbReference>
<dbReference type="HAMAP" id="MF_01006">
    <property type="entry name" value="Undec_diphosphatase"/>
    <property type="match status" value="1"/>
</dbReference>
<dbReference type="InterPro" id="IPR003824">
    <property type="entry name" value="UppP"/>
</dbReference>
<dbReference type="NCBIfam" id="NF001393">
    <property type="entry name" value="PRK00281.2-4"/>
    <property type="match status" value="1"/>
</dbReference>
<dbReference type="NCBIfam" id="TIGR00753">
    <property type="entry name" value="undec_PP_bacA"/>
    <property type="match status" value="1"/>
</dbReference>
<dbReference type="PANTHER" id="PTHR30622">
    <property type="entry name" value="UNDECAPRENYL-DIPHOSPHATASE"/>
    <property type="match status" value="1"/>
</dbReference>
<dbReference type="PANTHER" id="PTHR30622:SF4">
    <property type="entry name" value="UNDECAPRENYL-DIPHOSPHATASE"/>
    <property type="match status" value="1"/>
</dbReference>
<dbReference type="Pfam" id="PF02673">
    <property type="entry name" value="BacA"/>
    <property type="match status" value="1"/>
</dbReference>
<protein>
    <recommendedName>
        <fullName evidence="1">Undecaprenyl-diphosphatase</fullName>
        <ecNumber evidence="1">3.6.1.27</ecNumber>
    </recommendedName>
    <alternativeName>
        <fullName evidence="1">Bacitracin resistance protein</fullName>
    </alternativeName>
    <alternativeName>
        <fullName evidence="1">Undecaprenyl pyrophosphate phosphatase</fullName>
    </alternativeName>
</protein>
<feature type="chain" id="PRO_0000151234" description="Undecaprenyl-diphosphatase">
    <location>
        <begin position="1"/>
        <end position="267"/>
    </location>
</feature>
<feature type="transmembrane region" description="Helical" evidence="1">
    <location>
        <begin position="1"/>
        <end position="21"/>
    </location>
</feature>
<feature type="transmembrane region" description="Helical" evidence="1">
    <location>
        <begin position="39"/>
        <end position="59"/>
    </location>
</feature>
<feature type="transmembrane region" description="Helical" evidence="1">
    <location>
        <begin position="83"/>
        <end position="103"/>
    </location>
</feature>
<feature type="transmembrane region" description="Helical" evidence="1">
    <location>
        <begin position="111"/>
        <end position="131"/>
    </location>
</feature>
<feature type="transmembrane region" description="Helical" evidence="1">
    <location>
        <begin position="149"/>
        <end position="169"/>
    </location>
</feature>
<feature type="transmembrane region" description="Helical" evidence="1">
    <location>
        <begin position="189"/>
        <end position="209"/>
    </location>
</feature>
<feature type="transmembrane region" description="Helical" evidence="1">
    <location>
        <begin position="218"/>
        <end position="238"/>
    </location>
</feature>
<feature type="transmembrane region" description="Helical" evidence="1">
    <location>
        <begin position="245"/>
        <end position="265"/>
    </location>
</feature>
<sequence length="267" mass="29285">MSYFESFILALIQGFTEFLPISSSAHLILPSAILGWEDQGLAFDVAVHVGTLAAVVLYFRKEVVSLLSAFFASIFKGDRSKEAKLAWLIVLATIPACLFGFVMKDIVELYLRSAWVIATTTIVFGLLLWYVDKHAELKADEYQADWKKALFIGLAQAVAIIPGTSRSGATITAALYLGFTREAAARFSFLMSIPIIVLAGSYLGLKLVTSGEPVHSGFLLTGIITSFISAYICIHFFLKLISRMGMTPFVIYRLVLGVGLFAFLLTQ</sequence>
<keyword id="KW-0046">Antibiotic resistance</keyword>
<keyword id="KW-0997">Cell inner membrane</keyword>
<keyword id="KW-1003">Cell membrane</keyword>
<keyword id="KW-0133">Cell shape</keyword>
<keyword id="KW-0961">Cell wall biogenesis/degradation</keyword>
<keyword id="KW-0378">Hydrolase</keyword>
<keyword id="KW-0472">Membrane</keyword>
<keyword id="KW-0573">Peptidoglycan synthesis</keyword>
<keyword id="KW-1185">Reference proteome</keyword>
<keyword id="KW-0812">Transmembrane</keyword>
<keyword id="KW-1133">Transmembrane helix</keyword>